<evidence type="ECO:0000255" key="1">
    <source>
        <dbReference type="HAMAP-Rule" id="MF_00530"/>
    </source>
</evidence>
<comment type="function">
    <text evidence="1">Produces ATP from ADP in the presence of a proton gradient across the membrane.</text>
</comment>
<comment type="subunit">
    <text>F-type ATPases have 2 components, CF(1) - the catalytic core - and CF(0) - the membrane proton channel. CF(1) has five subunits: alpha(3), beta(3), gamma(1), delta(1), epsilon(1). CF(0) has three main subunits: a, b and c.</text>
</comment>
<comment type="subcellular location">
    <subcellularLocation>
        <location evidence="1">Cell inner membrane</location>
        <topology evidence="1">Peripheral membrane protein</topology>
    </subcellularLocation>
</comment>
<comment type="similarity">
    <text evidence="1">Belongs to the ATPase epsilon chain family.</text>
</comment>
<feature type="chain" id="PRO_0000188110" description="ATP synthase epsilon chain">
    <location>
        <begin position="1"/>
        <end position="135"/>
    </location>
</feature>
<accession>P63661</accession>
<accession>G0K7D4</accession>
<accession>Q8YJ34</accession>
<reference key="1">
    <citation type="journal article" date="2002" name="Proc. Natl. Acad. Sci. U.S.A.">
        <title>The Brucella suis genome reveals fundamental similarities between animal and plant pathogens and symbionts.</title>
        <authorList>
            <person name="Paulsen I.T."/>
            <person name="Seshadri R."/>
            <person name="Nelson K.E."/>
            <person name="Eisen J.A."/>
            <person name="Heidelberg J.F."/>
            <person name="Read T.D."/>
            <person name="Dodson R.J."/>
            <person name="Umayam L.A."/>
            <person name="Brinkac L.M."/>
            <person name="Beanan M.J."/>
            <person name="Daugherty S.C."/>
            <person name="DeBoy R.T."/>
            <person name="Durkin A.S."/>
            <person name="Kolonay J.F."/>
            <person name="Madupu R."/>
            <person name="Nelson W.C."/>
            <person name="Ayodeji B."/>
            <person name="Kraul M."/>
            <person name="Shetty J."/>
            <person name="Malek J.A."/>
            <person name="Van Aken S.E."/>
            <person name="Riedmuller S."/>
            <person name="Tettelin H."/>
            <person name="Gill S.R."/>
            <person name="White O."/>
            <person name="Salzberg S.L."/>
            <person name="Hoover D.L."/>
            <person name="Lindler L.E."/>
            <person name="Halling S.M."/>
            <person name="Boyle S.M."/>
            <person name="Fraser C.M."/>
        </authorList>
    </citation>
    <scope>NUCLEOTIDE SEQUENCE [LARGE SCALE GENOMIC DNA]</scope>
    <source>
        <strain>1330</strain>
    </source>
</reference>
<reference key="2">
    <citation type="journal article" date="2011" name="J. Bacteriol.">
        <title>Revised genome sequence of Brucella suis 1330.</title>
        <authorList>
            <person name="Tae H."/>
            <person name="Shallom S."/>
            <person name="Settlage R."/>
            <person name="Preston D."/>
            <person name="Adams L.G."/>
            <person name="Garner H.R."/>
        </authorList>
    </citation>
    <scope>NUCLEOTIDE SEQUENCE [LARGE SCALE GENOMIC DNA]</scope>
    <source>
        <strain>1330</strain>
    </source>
</reference>
<proteinExistence type="inferred from homology"/>
<sequence length="135" mass="14482">MAQAFQFELVSPERLLLSAQVTEVVIPGSEGYLTALAGHSPLMTTIMPGVVSVKLADGKTDSYVVFGGFADITPQGCTVLAESATHVDDIDPADIQHRIDHARKVLEDASSNEHRTKAEIFLHQLMTLQGAILPA</sequence>
<name>ATPE_BRUSU</name>
<keyword id="KW-0066">ATP synthesis</keyword>
<keyword id="KW-0997">Cell inner membrane</keyword>
<keyword id="KW-1003">Cell membrane</keyword>
<keyword id="KW-0139">CF(1)</keyword>
<keyword id="KW-0375">Hydrogen ion transport</keyword>
<keyword id="KW-0406">Ion transport</keyword>
<keyword id="KW-0472">Membrane</keyword>
<keyword id="KW-0813">Transport</keyword>
<gene>
    <name evidence="1" type="primary">atpC</name>
    <name type="ordered locus">BR1798</name>
    <name type="ordered locus">BS1330_I1792</name>
</gene>
<dbReference type="EMBL" id="AE014291">
    <property type="protein sequence ID" value="AAN30693.1"/>
    <property type="molecule type" value="Genomic_DNA"/>
</dbReference>
<dbReference type="EMBL" id="CP002997">
    <property type="protein sequence ID" value="AEM19110.1"/>
    <property type="molecule type" value="Genomic_DNA"/>
</dbReference>
<dbReference type="RefSeq" id="WP_002964875.1">
    <property type="nucleotide sequence ID" value="NZ_KN046804.1"/>
</dbReference>
<dbReference type="SMR" id="P63661"/>
<dbReference type="KEGG" id="bms:BR1798"/>
<dbReference type="KEGG" id="bsi:BS1330_I1792"/>
<dbReference type="PATRIC" id="fig|204722.21.peg.1185"/>
<dbReference type="HOGENOM" id="CLU_084338_2_1_5"/>
<dbReference type="Proteomes" id="UP000007104">
    <property type="component" value="Chromosome I"/>
</dbReference>
<dbReference type="GO" id="GO:0005886">
    <property type="term" value="C:plasma membrane"/>
    <property type="evidence" value="ECO:0007669"/>
    <property type="project" value="UniProtKB-SubCell"/>
</dbReference>
<dbReference type="GO" id="GO:0045259">
    <property type="term" value="C:proton-transporting ATP synthase complex"/>
    <property type="evidence" value="ECO:0007669"/>
    <property type="project" value="UniProtKB-KW"/>
</dbReference>
<dbReference type="GO" id="GO:0005524">
    <property type="term" value="F:ATP binding"/>
    <property type="evidence" value="ECO:0007669"/>
    <property type="project" value="UniProtKB-UniRule"/>
</dbReference>
<dbReference type="GO" id="GO:0046933">
    <property type="term" value="F:proton-transporting ATP synthase activity, rotational mechanism"/>
    <property type="evidence" value="ECO:0007669"/>
    <property type="project" value="UniProtKB-UniRule"/>
</dbReference>
<dbReference type="CDD" id="cd12152">
    <property type="entry name" value="F1-ATPase_delta"/>
    <property type="match status" value="1"/>
</dbReference>
<dbReference type="Gene3D" id="2.60.15.10">
    <property type="entry name" value="F0F1 ATP synthase delta/epsilon subunit, N-terminal"/>
    <property type="match status" value="1"/>
</dbReference>
<dbReference type="HAMAP" id="MF_00530">
    <property type="entry name" value="ATP_synth_epsil_bac"/>
    <property type="match status" value="1"/>
</dbReference>
<dbReference type="InterPro" id="IPR001469">
    <property type="entry name" value="ATP_synth_F1_dsu/esu"/>
</dbReference>
<dbReference type="InterPro" id="IPR020546">
    <property type="entry name" value="ATP_synth_F1_dsu/esu_N"/>
</dbReference>
<dbReference type="InterPro" id="IPR036771">
    <property type="entry name" value="ATPsynth_dsu/esu_N"/>
</dbReference>
<dbReference type="NCBIfam" id="TIGR01216">
    <property type="entry name" value="ATP_synt_epsi"/>
    <property type="match status" value="1"/>
</dbReference>
<dbReference type="NCBIfam" id="NF001851">
    <property type="entry name" value="PRK00571.2-4"/>
    <property type="match status" value="1"/>
</dbReference>
<dbReference type="PANTHER" id="PTHR13822">
    <property type="entry name" value="ATP SYNTHASE DELTA/EPSILON CHAIN"/>
    <property type="match status" value="1"/>
</dbReference>
<dbReference type="PANTHER" id="PTHR13822:SF10">
    <property type="entry name" value="ATP SYNTHASE EPSILON CHAIN, CHLOROPLASTIC"/>
    <property type="match status" value="1"/>
</dbReference>
<dbReference type="Pfam" id="PF02823">
    <property type="entry name" value="ATP-synt_DE_N"/>
    <property type="match status" value="1"/>
</dbReference>
<dbReference type="SUPFAM" id="SSF51344">
    <property type="entry name" value="Epsilon subunit of F1F0-ATP synthase N-terminal domain"/>
    <property type="match status" value="1"/>
</dbReference>
<organism>
    <name type="scientific">Brucella suis biovar 1 (strain 1330)</name>
    <dbReference type="NCBI Taxonomy" id="204722"/>
    <lineage>
        <taxon>Bacteria</taxon>
        <taxon>Pseudomonadati</taxon>
        <taxon>Pseudomonadota</taxon>
        <taxon>Alphaproteobacteria</taxon>
        <taxon>Hyphomicrobiales</taxon>
        <taxon>Brucellaceae</taxon>
        <taxon>Brucella/Ochrobactrum group</taxon>
        <taxon>Brucella</taxon>
    </lineage>
</organism>
<protein>
    <recommendedName>
        <fullName evidence="1">ATP synthase epsilon chain</fullName>
    </recommendedName>
    <alternativeName>
        <fullName evidence="1">ATP synthase F1 sector epsilon subunit</fullName>
    </alternativeName>
    <alternativeName>
        <fullName evidence="1">F-ATPase epsilon subunit</fullName>
    </alternativeName>
</protein>